<gene>
    <name type="ordered locus">Tmel_1630</name>
</gene>
<feature type="chain" id="PRO_1000013139" description="Putative membrane protein insertion efficiency factor">
    <location>
        <begin position="1"/>
        <end position="81"/>
    </location>
</feature>
<dbReference type="EMBL" id="CP000716">
    <property type="protein sequence ID" value="ABR31474.1"/>
    <property type="molecule type" value="Genomic_DNA"/>
</dbReference>
<dbReference type="RefSeq" id="WP_012057833.1">
    <property type="nucleotide sequence ID" value="NC_009616.1"/>
</dbReference>
<dbReference type="STRING" id="391009.Tmel_1630"/>
<dbReference type="KEGG" id="tme:Tmel_1630"/>
<dbReference type="eggNOG" id="COG0759">
    <property type="taxonomic scope" value="Bacteria"/>
</dbReference>
<dbReference type="HOGENOM" id="CLU_144811_6_0_0"/>
<dbReference type="OrthoDB" id="9801753at2"/>
<dbReference type="Proteomes" id="UP000001110">
    <property type="component" value="Chromosome"/>
</dbReference>
<dbReference type="GO" id="GO:0005886">
    <property type="term" value="C:plasma membrane"/>
    <property type="evidence" value="ECO:0007669"/>
    <property type="project" value="UniProtKB-SubCell"/>
</dbReference>
<dbReference type="HAMAP" id="MF_00386">
    <property type="entry name" value="UPF0161_YidD"/>
    <property type="match status" value="1"/>
</dbReference>
<dbReference type="InterPro" id="IPR002696">
    <property type="entry name" value="Membr_insert_effic_factor_YidD"/>
</dbReference>
<dbReference type="NCBIfam" id="TIGR00278">
    <property type="entry name" value="membrane protein insertion efficiency factor YidD"/>
    <property type="match status" value="1"/>
</dbReference>
<dbReference type="PANTHER" id="PTHR33383">
    <property type="entry name" value="MEMBRANE PROTEIN INSERTION EFFICIENCY FACTOR-RELATED"/>
    <property type="match status" value="1"/>
</dbReference>
<dbReference type="PANTHER" id="PTHR33383:SF1">
    <property type="entry name" value="MEMBRANE PROTEIN INSERTION EFFICIENCY FACTOR-RELATED"/>
    <property type="match status" value="1"/>
</dbReference>
<dbReference type="Pfam" id="PF01809">
    <property type="entry name" value="YidD"/>
    <property type="match status" value="1"/>
</dbReference>
<dbReference type="SMART" id="SM01234">
    <property type="entry name" value="Haemolytic"/>
    <property type="match status" value="1"/>
</dbReference>
<comment type="function">
    <text evidence="1">Could be involved in insertion of integral membrane proteins into the membrane.</text>
</comment>
<comment type="subcellular location">
    <subcellularLocation>
        <location evidence="1">Cell inner membrane</location>
        <topology evidence="1">Peripheral membrane protein</topology>
        <orientation evidence="1">Cytoplasmic side</orientation>
    </subcellularLocation>
</comment>
<comment type="similarity">
    <text evidence="1">Belongs to the UPF0161 family.</text>
</comment>
<proteinExistence type="inferred from homology"/>
<keyword id="KW-0997">Cell inner membrane</keyword>
<keyword id="KW-1003">Cell membrane</keyword>
<keyword id="KW-0472">Membrane</keyword>
<name>YIDD_THEM4</name>
<protein>
    <recommendedName>
        <fullName evidence="1">Putative membrane protein insertion efficiency factor</fullName>
    </recommendedName>
</protein>
<organism>
    <name type="scientific">Thermosipho melanesiensis (strain DSM 12029 / CIP 104789 / BI429)</name>
    <dbReference type="NCBI Taxonomy" id="391009"/>
    <lineage>
        <taxon>Bacteria</taxon>
        <taxon>Thermotogati</taxon>
        <taxon>Thermotogota</taxon>
        <taxon>Thermotogae</taxon>
        <taxon>Thermotogales</taxon>
        <taxon>Fervidobacteriaceae</taxon>
        <taxon>Thermosipho</taxon>
    </lineage>
</organism>
<evidence type="ECO:0000255" key="1">
    <source>
        <dbReference type="HAMAP-Rule" id="MF_00386"/>
    </source>
</evidence>
<sequence length="81" mass="9458">MKKIILALIRFYQKFISPLKPPTCIYTPTCSEYTYQAVKKFGVFKGLFLGFKRILRCNPLHEGGEDPVPDKFYIIKGRRLD</sequence>
<accession>A6LNH3</accession>
<reference key="1">
    <citation type="submission" date="2007-05" db="EMBL/GenBank/DDBJ databases">
        <title>Complete sequence of Thermosipho melanesiensis BI429.</title>
        <authorList>
            <consortium name="US DOE Joint Genome Institute"/>
            <person name="Copeland A."/>
            <person name="Lucas S."/>
            <person name="Lapidus A."/>
            <person name="Barry K."/>
            <person name="Glavina del Rio T."/>
            <person name="Dalin E."/>
            <person name="Tice H."/>
            <person name="Pitluck S."/>
            <person name="Chertkov O."/>
            <person name="Brettin T."/>
            <person name="Bruce D."/>
            <person name="Detter J.C."/>
            <person name="Han C."/>
            <person name="Schmutz J."/>
            <person name="Larimer F."/>
            <person name="Land M."/>
            <person name="Hauser L."/>
            <person name="Kyrpides N."/>
            <person name="Mikhailova N."/>
            <person name="Nelson K."/>
            <person name="Gogarten J.P."/>
            <person name="Noll K."/>
            <person name="Richardson P."/>
        </authorList>
    </citation>
    <scope>NUCLEOTIDE SEQUENCE [LARGE SCALE GENOMIC DNA]</scope>
    <source>
        <strain>DSM 12029 / CIP 104789 / BI429</strain>
    </source>
</reference>